<sequence length="118" mass="13262">MIVGHGIDLQEISAIEKVYQRNPRFAQKILTEQELAIFESFPYKRRLSYLAGRWSGKEAFAKAIGTGIGRLTFQDIEILNDVRGCPILTKSPFKGNSFISISHSGNYVQASVILEDKK</sequence>
<proteinExistence type="inferred from homology"/>
<name>ACPS_STRP8</name>
<keyword id="KW-0963">Cytoplasm</keyword>
<keyword id="KW-0275">Fatty acid biosynthesis</keyword>
<keyword id="KW-0276">Fatty acid metabolism</keyword>
<keyword id="KW-0444">Lipid biosynthesis</keyword>
<keyword id="KW-0443">Lipid metabolism</keyword>
<keyword id="KW-0460">Magnesium</keyword>
<keyword id="KW-0479">Metal-binding</keyword>
<keyword id="KW-0808">Transferase</keyword>
<accession>P63474</accession>
<accession>Q8NZK3</accession>
<comment type="function">
    <text evidence="1">Transfers the 4'-phosphopantetheine moiety from coenzyme A to a Ser of acyl-carrier-protein.</text>
</comment>
<comment type="catalytic activity">
    <reaction evidence="1">
        <text>apo-[ACP] + CoA = holo-[ACP] + adenosine 3',5'-bisphosphate + H(+)</text>
        <dbReference type="Rhea" id="RHEA:12068"/>
        <dbReference type="Rhea" id="RHEA-COMP:9685"/>
        <dbReference type="Rhea" id="RHEA-COMP:9690"/>
        <dbReference type="ChEBI" id="CHEBI:15378"/>
        <dbReference type="ChEBI" id="CHEBI:29999"/>
        <dbReference type="ChEBI" id="CHEBI:57287"/>
        <dbReference type="ChEBI" id="CHEBI:58343"/>
        <dbReference type="ChEBI" id="CHEBI:64479"/>
        <dbReference type="EC" id="2.7.8.7"/>
    </reaction>
</comment>
<comment type="cofactor">
    <cofactor evidence="1">
        <name>Mg(2+)</name>
        <dbReference type="ChEBI" id="CHEBI:18420"/>
    </cofactor>
</comment>
<comment type="subcellular location">
    <subcellularLocation>
        <location evidence="1">Cytoplasm</location>
    </subcellularLocation>
</comment>
<comment type="similarity">
    <text evidence="1">Belongs to the P-Pant transferase superfamily. AcpS family.</text>
</comment>
<feature type="chain" id="PRO_0000175718" description="Holo-[acyl-carrier-protein] synthase">
    <location>
        <begin position="1"/>
        <end position="118"/>
    </location>
</feature>
<feature type="binding site" evidence="1">
    <location>
        <position position="8"/>
    </location>
    <ligand>
        <name>Mg(2+)</name>
        <dbReference type="ChEBI" id="CHEBI:18420"/>
    </ligand>
</feature>
<feature type="binding site" evidence="1">
    <location>
        <position position="58"/>
    </location>
    <ligand>
        <name>Mg(2+)</name>
        <dbReference type="ChEBI" id="CHEBI:18420"/>
    </ligand>
</feature>
<dbReference type="EC" id="2.7.8.7" evidence="1"/>
<dbReference type="EMBL" id="AE009949">
    <property type="protein sequence ID" value="AAL98380.1"/>
    <property type="molecule type" value="Genomic_DNA"/>
</dbReference>
<dbReference type="RefSeq" id="WP_002983199.1">
    <property type="nucleotide sequence ID" value="NC_003485.1"/>
</dbReference>
<dbReference type="SMR" id="P63474"/>
<dbReference type="GeneID" id="69900361"/>
<dbReference type="KEGG" id="spm:spyM18_1872"/>
<dbReference type="HOGENOM" id="CLU_089696_1_2_9"/>
<dbReference type="GO" id="GO:0005737">
    <property type="term" value="C:cytoplasm"/>
    <property type="evidence" value="ECO:0007669"/>
    <property type="project" value="UniProtKB-SubCell"/>
</dbReference>
<dbReference type="GO" id="GO:0008897">
    <property type="term" value="F:holo-[acyl-carrier-protein] synthase activity"/>
    <property type="evidence" value="ECO:0007669"/>
    <property type="project" value="UniProtKB-UniRule"/>
</dbReference>
<dbReference type="GO" id="GO:0000287">
    <property type="term" value="F:magnesium ion binding"/>
    <property type="evidence" value="ECO:0007669"/>
    <property type="project" value="UniProtKB-UniRule"/>
</dbReference>
<dbReference type="GO" id="GO:0006633">
    <property type="term" value="P:fatty acid biosynthetic process"/>
    <property type="evidence" value="ECO:0007669"/>
    <property type="project" value="UniProtKB-UniRule"/>
</dbReference>
<dbReference type="Gene3D" id="3.90.470.20">
    <property type="entry name" value="4'-phosphopantetheinyl transferase domain"/>
    <property type="match status" value="1"/>
</dbReference>
<dbReference type="HAMAP" id="MF_00101">
    <property type="entry name" value="AcpS"/>
    <property type="match status" value="1"/>
</dbReference>
<dbReference type="InterPro" id="IPR008278">
    <property type="entry name" value="4-PPantetheinyl_Trfase_dom"/>
</dbReference>
<dbReference type="InterPro" id="IPR037143">
    <property type="entry name" value="4-PPantetheinyl_Trfase_dom_sf"/>
</dbReference>
<dbReference type="InterPro" id="IPR002582">
    <property type="entry name" value="ACPS"/>
</dbReference>
<dbReference type="InterPro" id="IPR004568">
    <property type="entry name" value="Ppantetheine-prot_Trfase_dom"/>
</dbReference>
<dbReference type="NCBIfam" id="TIGR00516">
    <property type="entry name" value="acpS"/>
    <property type="match status" value="1"/>
</dbReference>
<dbReference type="NCBIfam" id="TIGR00556">
    <property type="entry name" value="pantethn_trn"/>
    <property type="match status" value="1"/>
</dbReference>
<dbReference type="Pfam" id="PF01648">
    <property type="entry name" value="ACPS"/>
    <property type="match status" value="1"/>
</dbReference>
<dbReference type="SUPFAM" id="SSF56214">
    <property type="entry name" value="4'-phosphopantetheinyl transferase"/>
    <property type="match status" value="1"/>
</dbReference>
<gene>
    <name evidence="1" type="primary">acpS</name>
    <name type="ordered locus">spyM18_1872</name>
</gene>
<reference key="1">
    <citation type="journal article" date="2002" name="Proc. Natl. Acad. Sci. U.S.A.">
        <title>Genome sequence and comparative microarray analysis of serotype M18 group A Streptococcus strains associated with acute rheumatic fever outbreaks.</title>
        <authorList>
            <person name="Smoot J.C."/>
            <person name="Barbian K.D."/>
            <person name="Van Gompel J.J."/>
            <person name="Smoot L.M."/>
            <person name="Chaussee M.S."/>
            <person name="Sylva G.L."/>
            <person name="Sturdevant D.E."/>
            <person name="Ricklefs S.M."/>
            <person name="Porcella S.F."/>
            <person name="Parkins L.D."/>
            <person name="Beres S.B."/>
            <person name="Campbell D.S."/>
            <person name="Smith T.M."/>
            <person name="Zhang Q."/>
            <person name="Kapur V."/>
            <person name="Daly J.A."/>
            <person name="Veasy L.G."/>
            <person name="Musser J.M."/>
        </authorList>
    </citation>
    <scope>NUCLEOTIDE SEQUENCE [LARGE SCALE GENOMIC DNA]</scope>
    <source>
        <strain>MGAS8232</strain>
    </source>
</reference>
<evidence type="ECO:0000255" key="1">
    <source>
        <dbReference type="HAMAP-Rule" id="MF_00101"/>
    </source>
</evidence>
<protein>
    <recommendedName>
        <fullName evidence="1">Holo-[acyl-carrier-protein] synthase</fullName>
        <shortName evidence="1">Holo-ACP synthase</shortName>
        <ecNumber evidence="1">2.7.8.7</ecNumber>
    </recommendedName>
    <alternativeName>
        <fullName evidence="1">4'-phosphopantetheinyl transferase AcpS</fullName>
    </alternativeName>
</protein>
<organism>
    <name type="scientific">Streptococcus pyogenes serotype M18 (strain MGAS8232)</name>
    <dbReference type="NCBI Taxonomy" id="186103"/>
    <lineage>
        <taxon>Bacteria</taxon>
        <taxon>Bacillati</taxon>
        <taxon>Bacillota</taxon>
        <taxon>Bacilli</taxon>
        <taxon>Lactobacillales</taxon>
        <taxon>Streptococcaceae</taxon>
        <taxon>Streptococcus</taxon>
    </lineage>
</organism>